<comment type="function">
    <text evidence="1">Catalyzes the anti-1,4-elimination of the C-3 phosphate and the C-6 proR hydrogen from 5-enolpyruvylshikimate-3-phosphate (EPSP) to yield chorismate, which is the branch point compound that serves as the starting substrate for the three terminal pathways of aromatic amino acid biosynthesis. This reaction introduces a second double bond into the aromatic ring system.</text>
</comment>
<comment type="catalytic activity">
    <reaction evidence="1">
        <text>5-O-(1-carboxyvinyl)-3-phosphoshikimate = chorismate + phosphate</text>
        <dbReference type="Rhea" id="RHEA:21020"/>
        <dbReference type="ChEBI" id="CHEBI:29748"/>
        <dbReference type="ChEBI" id="CHEBI:43474"/>
        <dbReference type="ChEBI" id="CHEBI:57701"/>
        <dbReference type="EC" id="4.2.3.5"/>
    </reaction>
</comment>
<comment type="cofactor">
    <cofactor evidence="1">
        <name>FMNH2</name>
        <dbReference type="ChEBI" id="CHEBI:57618"/>
    </cofactor>
    <text evidence="1">Reduced FMN (FMNH(2)).</text>
</comment>
<comment type="pathway">
    <text evidence="1">Metabolic intermediate biosynthesis; chorismate biosynthesis; chorismate from D-erythrose 4-phosphate and phosphoenolpyruvate: step 7/7.</text>
</comment>
<comment type="subunit">
    <text evidence="1">Homotetramer.</text>
</comment>
<comment type="similarity">
    <text evidence="1">Belongs to the chorismate synthase family.</text>
</comment>
<feature type="chain" id="PRO_1000078984" description="Chorismate synthase">
    <location>
        <begin position="1"/>
        <end position="390"/>
    </location>
</feature>
<feature type="binding site" evidence="1">
    <location>
        <position position="39"/>
    </location>
    <ligand>
        <name>NADP(+)</name>
        <dbReference type="ChEBI" id="CHEBI:58349"/>
    </ligand>
</feature>
<feature type="binding site" evidence="1">
    <location>
        <position position="45"/>
    </location>
    <ligand>
        <name>NADP(+)</name>
        <dbReference type="ChEBI" id="CHEBI:58349"/>
    </ligand>
</feature>
<feature type="binding site" evidence="1">
    <location>
        <begin position="132"/>
        <end position="134"/>
    </location>
    <ligand>
        <name>FMN</name>
        <dbReference type="ChEBI" id="CHEBI:58210"/>
    </ligand>
</feature>
<feature type="binding site" evidence="1">
    <location>
        <begin position="253"/>
        <end position="254"/>
    </location>
    <ligand>
        <name>FMN</name>
        <dbReference type="ChEBI" id="CHEBI:58210"/>
    </ligand>
</feature>
<feature type="binding site" evidence="1">
    <location>
        <position position="298"/>
    </location>
    <ligand>
        <name>FMN</name>
        <dbReference type="ChEBI" id="CHEBI:58210"/>
    </ligand>
</feature>
<feature type="binding site" evidence="1">
    <location>
        <begin position="313"/>
        <end position="317"/>
    </location>
    <ligand>
        <name>FMN</name>
        <dbReference type="ChEBI" id="CHEBI:58210"/>
    </ligand>
</feature>
<feature type="binding site" evidence="1">
    <location>
        <position position="339"/>
    </location>
    <ligand>
        <name>FMN</name>
        <dbReference type="ChEBI" id="CHEBI:58210"/>
    </ligand>
</feature>
<sequence>MRYITAGESHGPQLTTILEGIPAGLPLVADDINAELARRQKGYGRGRRMQIEKDQVQIVSGVRHGQTIGAPIALIVENKDFAHWTKIMGAAPLTEQEKKEMKRQITRPRPGHADLNGAIKYGHRDMRNVLERSSARETTVRVAAGAVAKKVLAELGIKVAGHVIEIGGVRAEQTTYETIEQLQEITEASPVRCLDGEAGKKMMQAIDDAKASGDSIGGIVEVIVEGMPIGVGSYVHYDRKLDAKLAAAVMSINAFKGVEIGIGFEAAHRPGSQVHDEILWNEEEGYTRRTNHAGGLEGGMTTGMPVVVRGVMKPIPTLYKPLQSVDIETKESFSASIERSDSCAVPAASVVAEAVVAWELATALVEQFGADRMDCIRENIERHNEYAREF</sequence>
<organism>
    <name type="scientific">Bacillus cytotoxicus (strain DSM 22905 / CIP 110041 / 391-98 / NVH 391-98)</name>
    <dbReference type="NCBI Taxonomy" id="315749"/>
    <lineage>
        <taxon>Bacteria</taxon>
        <taxon>Bacillati</taxon>
        <taxon>Bacillota</taxon>
        <taxon>Bacilli</taxon>
        <taxon>Bacillales</taxon>
        <taxon>Bacillaceae</taxon>
        <taxon>Bacillus</taxon>
        <taxon>Bacillus cereus group</taxon>
    </lineage>
</organism>
<gene>
    <name evidence="1" type="primary">aroC</name>
    <name type="ordered locus">Bcer98_1239</name>
</gene>
<proteinExistence type="inferred from homology"/>
<name>AROC_BACCN</name>
<protein>
    <recommendedName>
        <fullName evidence="1">Chorismate synthase</fullName>
        <shortName evidence="1">CS</shortName>
        <ecNumber evidence="1">4.2.3.5</ecNumber>
    </recommendedName>
    <alternativeName>
        <fullName evidence="1">5-enolpyruvylshikimate-3-phosphate phospholyase</fullName>
    </alternativeName>
</protein>
<evidence type="ECO:0000255" key="1">
    <source>
        <dbReference type="HAMAP-Rule" id="MF_00300"/>
    </source>
</evidence>
<keyword id="KW-0028">Amino-acid biosynthesis</keyword>
<keyword id="KW-0057">Aromatic amino acid biosynthesis</keyword>
<keyword id="KW-0274">FAD</keyword>
<keyword id="KW-0285">Flavoprotein</keyword>
<keyword id="KW-0288">FMN</keyword>
<keyword id="KW-0456">Lyase</keyword>
<keyword id="KW-0521">NADP</keyword>
<dbReference type="EC" id="4.2.3.5" evidence="1"/>
<dbReference type="EMBL" id="CP000764">
    <property type="protein sequence ID" value="ABS21561.1"/>
    <property type="molecule type" value="Genomic_DNA"/>
</dbReference>
<dbReference type="RefSeq" id="WP_011984312.1">
    <property type="nucleotide sequence ID" value="NC_009674.1"/>
</dbReference>
<dbReference type="SMR" id="A7GN53"/>
<dbReference type="STRING" id="315749.Bcer98_1239"/>
<dbReference type="GeneID" id="33896588"/>
<dbReference type="KEGG" id="bcy:Bcer98_1239"/>
<dbReference type="eggNOG" id="COG0082">
    <property type="taxonomic scope" value="Bacteria"/>
</dbReference>
<dbReference type="HOGENOM" id="CLU_034547_2_0_9"/>
<dbReference type="OrthoDB" id="9771806at2"/>
<dbReference type="UniPathway" id="UPA00053">
    <property type="reaction ID" value="UER00090"/>
</dbReference>
<dbReference type="Proteomes" id="UP000002300">
    <property type="component" value="Chromosome"/>
</dbReference>
<dbReference type="GO" id="GO:0005829">
    <property type="term" value="C:cytosol"/>
    <property type="evidence" value="ECO:0007669"/>
    <property type="project" value="TreeGrafter"/>
</dbReference>
<dbReference type="GO" id="GO:0004107">
    <property type="term" value="F:chorismate synthase activity"/>
    <property type="evidence" value="ECO:0007669"/>
    <property type="project" value="UniProtKB-UniRule"/>
</dbReference>
<dbReference type="GO" id="GO:0010181">
    <property type="term" value="F:FMN binding"/>
    <property type="evidence" value="ECO:0007669"/>
    <property type="project" value="TreeGrafter"/>
</dbReference>
<dbReference type="GO" id="GO:0008652">
    <property type="term" value="P:amino acid biosynthetic process"/>
    <property type="evidence" value="ECO:0007669"/>
    <property type="project" value="UniProtKB-KW"/>
</dbReference>
<dbReference type="GO" id="GO:0009073">
    <property type="term" value="P:aromatic amino acid family biosynthetic process"/>
    <property type="evidence" value="ECO:0007669"/>
    <property type="project" value="UniProtKB-KW"/>
</dbReference>
<dbReference type="GO" id="GO:0009423">
    <property type="term" value="P:chorismate biosynthetic process"/>
    <property type="evidence" value="ECO:0007669"/>
    <property type="project" value="UniProtKB-UniRule"/>
</dbReference>
<dbReference type="CDD" id="cd07304">
    <property type="entry name" value="Chorismate_synthase"/>
    <property type="match status" value="1"/>
</dbReference>
<dbReference type="FunFam" id="3.60.150.10:FF:000002">
    <property type="entry name" value="Chorismate synthase"/>
    <property type="match status" value="1"/>
</dbReference>
<dbReference type="Gene3D" id="3.60.150.10">
    <property type="entry name" value="Chorismate synthase AroC"/>
    <property type="match status" value="1"/>
</dbReference>
<dbReference type="HAMAP" id="MF_00300">
    <property type="entry name" value="Chorismate_synth"/>
    <property type="match status" value="1"/>
</dbReference>
<dbReference type="InterPro" id="IPR000453">
    <property type="entry name" value="Chorismate_synth"/>
</dbReference>
<dbReference type="InterPro" id="IPR035904">
    <property type="entry name" value="Chorismate_synth_AroC_sf"/>
</dbReference>
<dbReference type="InterPro" id="IPR020541">
    <property type="entry name" value="Chorismate_synthase_CS"/>
</dbReference>
<dbReference type="NCBIfam" id="TIGR00033">
    <property type="entry name" value="aroC"/>
    <property type="match status" value="1"/>
</dbReference>
<dbReference type="NCBIfam" id="NF003793">
    <property type="entry name" value="PRK05382.1"/>
    <property type="match status" value="1"/>
</dbReference>
<dbReference type="PANTHER" id="PTHR21085">
    <property type="entry name" value="CHORISMATE SYNTHASE"/>
    <property type="match status" value="1"/>
</dbReference>
<dbReference type="PANTHER" id="PTHR21085:SF0">
    <property type="entry name" value="CHORISMATE SYNTHASE"/>
    <property type="match status" value="1"/>
</dbReference>
<dbReference type="Pfam" id="PF01264">
    <property type="entry name" value="Chorismate_synt"/>
    <property type="match status" value="1"/>
</dbReference>
<dbReference type="PIRSF" id="PIRSF001456">
    <property type="entry name" value="Chorismate_synth"/>
    <property type="match status" value="1"/>
</dbReference>
<dbReference type="SUPFAM" id="SSF103263">
    <property type="entry name" value="Chorismate synthase, AroC"/>
    <property type="match status" value="1"/>
</dbReference>
<dbReference type="PROSITE" id="PS00787">
    <property type="entry name" value="CHORISMATE_SYNTHASE_1"/>
    <property type="match status" value="1"/>
</dbReference>
<dbReference type="PROSITE" id="PS00788">
    <property type="entry name" value="CHORISMATE_SYNTHASE_2"/>
    <property type="match status" value="1"/>
</dbReference>
<dbReference type="PROSITE" id="PS00789">
    <property type="entry name" value="CHORISMATE_SYNTHASE_3"/>
    <property type="match status" value="1"/>
</dbReference>
<reference key="1">
    <citation type="journal article" date="2008" name="Chem. Biol. Interact.">
        <title>Extending the Bacillus cereus group genomics to putative food-borne pathogens of different toxicity.</title>
        <authorList>
            <person name="Lapidus A."/>
            <person name="Goltsman E."/>
            <person name="Auger S."/>
            <person name="Galleron N."/>
            <person name="Segurens B."/>
            <person name="Dossat C."/>
            <person name="Land M.L."/>
            <person name="Broussolle V."/>
            <person name="Brillard J."/>
            <person name="Guinebretiere M.-H."/>
            <person name="Sanchis V."/>
            <person name="Nguen-the C."/>
            <person name="Lereclus D."/>
            <person name="Richardson P."/>
            <person name="Wincker P."/>
            <person name="Weissenbach J."/>
            <person name="Ehrlich S.D."/>
            <person name="Sorokin A."/>
        </authorList>
    </citation>
    <scope>NUCLEOTIDE SEQUENCE [LARGE SCALE GENOMIC DNA]</scope>
    <source>
        <strain>DSM 22905 / CIP 110041 / 391-98 / NVH 391-98</strain>
    </source>
</reference>
<accession>A7GN53</accession>